<protein>
    <recommendedName>
        <fullName evidence="1">Arginine--tRNA ligase</fullName>
        <ecNumber evidence="1">6.1.1.19</ecNumber>
    </recommendedName>
    <alternativeName>
        <fullName evidence="1">Arginyl-tRNA synthetase</fullName>
        <shortName evidence="1">ArgRS</shortName>
    </alternativeName>
</protein>
<feature type="chain" id="PRO_1000095400" description="Arginine--tRNA ligase">
    <location>
        <begin position="1"/>
        <end position="577"/>
    </location>
</feature>
<feature type="short sequence motif" description="'HIGH' region">
    <location>
        <begin position="122"/>
        <end position="132"/>
    </location>
</feature>
<organism>
    <name type="scientific">Salmonella enteritidis PT4 (strain P125109)</name>
    <dbReference type="NCBI Taxonomy" id="550537"/>
    <lineage>
        <taxon>Bacteria</taxon>
        <taxon>Pseudomonadati</taxon>
        <taxon>Pseudomonadota</taxon>
        <taxon>Gammaproteobacteria</taxon>
        <taxon>Enterobacterales</taxon>
        <taxon>Enterobacteriaceae</taxon>
        <taxon>Salmonella</taxon>
    </lineage>
</organism>
<comment type="catalytic activity">
    <reaction evidence="1">
        <text>tRNA(Arg) + L-arginine + ATP = L-arginyl-tRNA(Arg) + AMP + diphosphate</text>
        <dbReference type="Rhea" id="RHEA:20301"/>
        <dbReference type="Rhea" id="RHEA-COMP:9658"/>
        <dbReference type="Rhea" id="RHEA-COMP:9673"/>
        <dbReference type="ChEBI" id="CHEBI:30616"/>
        <dbReference type="ChEBI" id="CHEBI:32682"/>
        <dbReference type="ChEBI" id="CHEBI:33019"/>
        <dbReference type="ChEBI" id="CHEBI:78442"/>
        <dbReference type="ChEBI" id="CHEBI:78513"/>
        <dbReference type="ChEBI" id="CHEBI:456215"/>
        <dbReference type="EC" id="6.1.1.19"/>
    </reaction>
</comment>
<comment type="subunit">
    <text evidence="1">Monomer.</text>
</comment>
<comment type="subcellular location">
    <subcellularLocation>
        <location evidence="1">Cytoplasm</location>
    </subcellularLocation>
</comment>
<comment type="similarity">
    <text evidence="1">Belongs to the class-I aminoacyl-tRNA synthetase family.</text>
</comment>
<proteinExistence type="inferred from homology"/>
<evidence type="ECO:0000255" key="1">
    <source>
        <dbReference type="HAMAP-Rule" id="MF_00123"/>
    </source>
</evidence>
<sequence length="577" mass="64296">MNIQALLSEKVSQAMIAAGAPADCEPQVRQSAKVQFGDYQANGMMAVAKKLGMAPRQLAEQVLTHLDLSGIASKVEIAGPGFINIFLEPAFLAEQVQQALTSDRLGVSQPTRQTIVVDYSAPNVAKEMHVGHLRSTIIGDAAVRTLEFLGHHVIRANHVGDWGTQFGMLIAWLEKQQQENAGDMALADLEGFYRDAKKHYDEDEAFAERARNYVVKLQSGDTYFREMWRKLVDITMTQNQITYDRLNVTLTRDDVMGESLYNPMLPGIVADLKAKGLAVESEGATVVFLDEFKNKEGDPMGVIIQKKDGGYLYTTTDIACAKYRYETLHADRVLYYIDSRQHQHLMQAWTIVRKAGYVPDSVPLEHHMFGMMLGKDGKPFKTRAGGTVKLADLLDEALERARRLVAEKNPDMSADELEKLANAVGIGAVKYADLSKNRTTDYIFDWDNMLAFEGNTAPYMQYAYTRVLSVFRKADIDEQALASAPVIISEDREAQLAARLLQFEETLTVVAREGTPHVMCAYLYDVAGLFSGFYEHCPILSAENDAVRNSRLKLAQLTAKTLKLGLDTLGIETVERM</sequence>
<name>SYR_SALEP</name>
<reference key="1">
    <citation type="journal article" date="2008" name="Genome Res.">
        <title>Comparative genome analysis of Salmonella enteritidis PT4 and Salmonella gallinarum 287/91 provides insights into evolutionary and host adaptation pathways.</title>
        <authorList>
            <person name="Thomson N.R."/>
            <person name="Clayton D.J."/>
            <person name="Windhorst D."/>
            <person name="Vernikos G."/>
            <person name="Davidson S."/>
            <person name="Churcher C."/>
            <person name="Quail M.A."/>
            <person name="Stevens M."/>
            <person name="Jones M.A."/>
            <person name="Watson M."/>
            <person name="Barron A."/>
            <person name="Layton A."/>
            <person name="Pickard D."/>
            <person name="Kingsley R.A."/>
            <person name="Bignell A."/>
            <person name="Clark L."/>
            <person name="Harris B."/>
            <person name="Ormond D."/>
            <person name="Abdellah Z."/>
            <person name="Brooks K."/>
            <person name="Cherevach I."/>
            <person name="Chillingworth T."/>
            <person name="Woodward J."/>
            <person name="Norberczak H."/>
            <person name="Lord A."/>
            <person name="Arrowsmith C."/>
            <person name="Jagels K."/>
            <person name="Moule S."/>
            <person name="Mungall K."/>
            <person name="Saunders M."/>
            <person name="Whitehead S."/>
            <person name="Chabalgoity J.A."/>
            <person name="Maskell D."/>
            <person name="Humphreys T."/>
            <person name="Roberts M."/>
            <person name="Barrow P.A."/>
            <person name="Dougan G."/>
            <person name="Parkhill J."/>
        </authorList>
    </citation>
    <scope>NUCLEOTIDE SEQUENCE [LARGE SCALE GENOMIC DNA]</scope>
    <source>
        <strain>P125109</strain>
    </source>
</reference>
<gene>
    <name evidence="1" type="primary">argS</name>
    <name type="ordered locus">SEN1094</name>
</gene>
<dbReference type="EC" id="6.1.1.19" evidence="1"/>
<dbReference type="EMBL" id="AM933172">
    <property type="protein sequence ID" value="CAR32677.1"/>
    <property type="molecule type" value="Genomic_DNA"/>
</dbReference>
<dbReference type="RefSeq" id="WP_001025369.1">
    <property type="nucleotide sequence ID" value="NC_011294.1"/>
</dbReference>
<dbReference type="SMR" id="B5R142"/>
<dbReference type="KEGG" id="set:SEN1094"/>
<dbReference type="HOGENOM" id="CLU_006406_5_1_6"/>
<dbReference type="Proteomes" id="UP000000613">
    <property type="component" value="Chromosome"/>
</dbReference>
<dbReference type="GO" id="GO:0005737">
    <property type="term" value="C:cytoplasm"/>
    <property type="evidence" value="ECO:0007669"/>
    <property type="project" value="UniProtKB-SubCell"/>
</dbReference>
<dbReference type="GO" id="GO:0004814">
    <property type="term" value="F:arginine-tRNA ligase activity"/>
    <property type="evidence" value="ECO:0007669"/>
    <property type="project" value="UniProtKB-UniRule"/>
</dbReference>
<dbReference type="GO" id="GO:0005524">
    <property type="term" value="F:ATP binding"/>
    <property type="evidence" value="ECO:0007669"/>
    <property type="project" value="UniProtKB-UniRule"/>
</dbReference>
<dbReference type="GO" id="GO:0006420">
    <property type="term" value="P:arginyl-tRNA aminoacylation"/>
    <property type="evidence" value="ECO:0007669"/>
    <property type="project" value="UniProtKB-UniRule"/>
</dbReference>
<dbReference type="CDD" id="cd07956">
    <property type="entry name" value="Anticodon_Ia_Arg"/>
    <property type="match status" value="1"/>
</dbReference>
<dbReference type="CDD" id="cd00671">
    <property type="entry name" value="ArgRS_core"/>
    <property type="match status" value="1"/>
</dbReference>
<dbReference type="FunFam" id="1.10.730.10:FF:000001">
    <property type="entry name" value="Arginine--tRNA ligase"/>
    <property type="match status" value="1"/>
</dbReference>
<dbReference type="FunFam" id="3.30.1360.70:FF:000001">
    <property type="entry name" value="Arginine--tRNA ligase"/>
    <property type="match status" value="1"/>
</dbReference>
<dbReference type="FunFam" id="3.40.50.620:FF:000030">
    <property type="entry name" value="Arginine--tRNA ligase"/>
    <property type="match status" value="1"/>
</dbReference>
<dbReference type="Gene3D" id="3.30.1360.70">
    <property type="entry name" value="Arginyl tRNA synthetase N-terminal domain"/>
    <property type="match status" value="1"/>
</dbReference>
<dbReference type="Gene3D" id="3.40.50.620">
    <property type="entry name" value="HUPs"/>
    <property type="match status" value="1"/>
</dbReference>
<dbReference type="Gene3D" id="1.10.730.10">
    <property type="entry name" value="Isoleucyl-tRNA Synthetase, Domain 1"/>
    <property type="match status" value="1"/>
</dbReference>
<dbReference type="HAMAP" id="MF_00123">
    <property type="entry name" value="Arg_tRNA_synth"/>
    <property type="match status" value="1"/>
</dbReference>
<dbReference type="InterPro" id="IPR001412">
    <property type="entry name" value="aa-tRNA-synth_I_CS"/>
</dbReference>
<dbReference type="InterPro" id="IPR001278">
    <property type="entry name" value="Arg-tRNA-ligase"/>
</dbReference>
<dbReference type="InterPro" id="IPR005148">
    <property type="entry name" value="Arg-tRNA-synth_N"/>
</dbReference>
<dbReference type="InterPro" id="IPR036695">
    <property type="entry name" value="Arg-tRNA-synth_N_sf"/>
</dbReference>
<dbReference type="InterPro" id="IPR035684">
    <property type="entry name" value="ArgRS_core"/>
</dbReference>
<dbReference type="InterPro" id="IPR008909">
    <property type="entry name" value="DALR_anticod-bd"/>
</dbReference>
<dbReference type="InterPro" id="IPR014729">
    <property type="entry name" value="Rossmann-like_a/b/a_fold"/>
</dbReference>
<dbReference type="InterPro" id="IPR009080">
    <property type="entry name" value="tRNAsynth_Ia_anticodon-bd"/>
</dbReference>
<dbReference type="NCBIfam" id="TIGR00456">
    <property type="entry name" value="argS"/>
    <property type="match status" value="1"/>
</dbReference>
<dbReference type="PANTHER" id="PTHR11956:SF5">
    <property type="entry name" value="ARGININE--TRNA LIGASE, CYTOPLASMIC"/>
    <property type="match status" value="1"/>
</dbReference>
<dbReference type="PANTHER" id="PTHR11956">
    <property type="entry name" value="ARGINYL-TRNA SYNTHETASE"/>
    <property type="match status" value="1"/>
</dbReference>
<dbReference type="Pfam" id="PF03485">
    <property type="entry name" value="Arg_tRNA_synt_N"/>
    <property type="match status" value="1"/>
</dbReference>
<dbReference type="Pfam" id="PF05746">
    <property type="entry name" value="DALR_1"/>
    <property type="match status" value="1"/>
</dbReference>
<dbReference type="Pfam" id="PF00750">
    <property type="entry name" value="tRNA-synt_1d"/>
    <property type="match status" value="1"/>
</dbReference>
<dbReference type="PRINTS" id="PR01038">
    <property type="entry name" value="TRNASYNTHARG"/>
</dbReference>
<dbReference type="SMART" id="SM01016">
    <property type="entry name" value="Arg_tRNA_synt_N"/>
    <property type="match status" value="1"/>
</dbReference>
<dbReference type="SMART" id="SM00836">
    <property type="entry name" value="DALR_1"/>
    <property type="match status" value="1"/>
</dbReference>
<dbReference type="SUPFAM" id="SSF47323">
    <property type="entry name" value="Anticodon-binding domain of a subclass of class I aminoacyl-tRNA synthetases"/>
    <property type="match status" value="1"/>
</dbReference>
<dbReference type="SUPFAM" id="SSF55190">
    <property type="entry name" value="Arginyl-tRNA synthetase (ArgRS), N-terminal 'additional' domain"/>
    <property type="match status" value="1"/>
</dbReference>
<dbReference type="SUPFAM" id="SSF52374">
    <property type="entry name" value="Nucleotidylyl transferase"/>
    <property type="match status" value="1"/>
</dbReference>
<dbReference type="PROSITE" id="PS00178">
    <property type="entry name" value="AA_TRNA_LIGASE_I"/>
    <property type="match status" value="1"/>
</dbReference>
<accession>B5R142</accession>
<keyword id="KW-0030">Aminoacyl-tRNA synthetase</keyword>
<keyword id="KW-0067">ATP-binding</keyword>
<keyword id="KW-0963">Cytoplasm</keyword>
<keyword id="KW-0436">Ligase</keyword>
<keyword id="KW-0547">Nucleotide-binding</keyword>
<keyword id="KW-0648">Protein biosynthesis</keyword>